<feature type="chain" id="PRO_0000185804" description="Glutathione S-transferase 8.2">
    <location>
        <begin position="1" status="less than"/>
        <end position="32" status="greater than"/>
    </location>
</feature>
<feature type="binding site" evidence="1">
    <location>
        <begin position="21"/>
        <end position="22"/>
    </location>
    <ligand>
        <name>glutathione</name>
        <dbReference type="ChEBI" id="CHEBI:57925"/>
    </ligand>
</feature>
<feature type="non-consecutive residues" evidence="2">
    <location>
        <begin position="16"/>
        <end position="17"/>
    </location>
</feature>
<feature type="non-terminal residue">
    <location>
        <position position="1"/>
    </location>
</feature>
<feature type="non-terminal residue">
    <location>
        <position position="32"/>
    </location>
</feature>
<comment type="function">
    <text>Conjugation of reduced glutathione to a wide number of exogenous and endogenous hydrophobic electrophiles.</text>
</comment>
<comment type="catalytic activity">
    <reaction>
        <text>RX + glutathione = an S-substituted glutathione + a halide anion + H(+)</text>
        <dbReference type="Rhea" id="RHEA:16437"/>
        <dbReference type="ChEBI" id="CHEBI:15378"/>
        <dbReference type="ChEBI" id="CHEBI:16042"/>
        <dbReference type="ChEBI" id="CHEBI:17792"/>
        <dbReference type="ChEBI" id="CHEBI:57925"/>
        <dbReference type="ChEBI" id="CHEBI:90779"/>
        <dbReference type="EC" id="2.5.1.18"/>
    </reaction>
</comment>
<comment type="subunit">
    <text>Homodimer.</text>
</comment>
<comment type="subcellular location">
    <subcellularLocation>
        <location>Cytoplasm</location>
    </subcellularLocation>
</comment>
<comment type="PTM">
    <text>The N-terminus is blocked.</text>
</comment>
<comment type="similarity">
    <text evidence="2">Belongs to the GST superfamily. Alpha family.</text>
</comment>
<organism>
    <name type="scientific">Dicentrarchus labrax</name>
    <name type="common">European seabass</name>
    <name type="synonym">Morone labrax</name>
    <dbReference type="NCBI Taxonomy" id="13489"/>
    <lineage>
        <taxon>Eukaryota</taxon>
        <taxon>Metazoa</taxon>
        <taxon>Chordata</taxon>
        <taxon>Craniata</taxon>
        <taxon>Vertebrata</taxon>
        <taxon>Euteleostomi</taxon>
        <taxon>Actinopterygii</taxon>
        <taxon>Neopterygii</taxon>
        <taxon>Teleostei</taxon>
        <taxon>Neoteleostei</taxon>
        <taxon>Acanthomorphata</taxon>
        <taxon>Eupercaria</taxon>
        <taxon>Moronidae</taxon>
        <taxon>Dicentrarchus</taxon>
    </lineage>
</organism>
<evidence type="ECO:0000250" key="1">
    <source>
        <dbReference type="UniProtKB" id="P13745"/>
    </source>
</evidence>
<evidence type="ECO:0000305" key="2"/>
<reference key="1">
    <citation type="journal article" date="2000" name="Arch. Biochem. Biophys.">
        <title>Purification and characterization of glutathione transferases from the sea bass (Dicentrarchus labrax) liver.</title>
        <authorList>
            <person name="Angelucci S."/>
            <person name="Sacchetta P."/>
            <person name="Moio P."/>
            <person name="Melino S."/>
            <person name="Petruzzelli R."/>
            <person name="Gervasi P."/>
            <person name="Di Ilio C."/>
        </authorList>
    </citation>
    <scope>PROTEIN SEQUENCE</scope>
    <source>
        <tissue>Liver</tissue>
    </source>
</reference>
<dbReference type="EC" id="2.5.1.18"/>
<dbReference type="Proteomes" id="UP000694389">
    <property type="component" value="Unplaced"/>
</dbReference>
<dbReference type="GO" id="GO:0005737">
    <property type="term" value="C:cytoplasm"/>
    <property type="evidence" value="ECO:0007669"/>
    <property type="project" value="UniProtKB-SubCell"/>
</dbReference>
<dbReference type="GO" id="GO:0004364">
    <property type="term" value="F:glutathione transferase activity"/>
    <property type="evidence" value="ECO:0007669"/>
    <property type="project" value="UniProtKB-EC"/>
</dbReference>
<proteinExistence type="evidence at protein level"/>
<accession>P82608</accession>
<sequence length="32" mass="3743">MESIRWLLTVAQFDFDMKLVQSXAIVNYVANK</sequence>
<protein>
    <recommendedName>
        <fullName>Glutathione S-transferase 8.2</fullName>
        <shortName>GST-8.2</shortName>
        <ecNumber>2.5.1.18</ecNumber>
    </recommendedName>
    <alternativeName>
        <fullName>GST class-alpha</fullName>
    </alternativeName>
</protein>
<name>GST82_DICLA</name>
<keyword id="KW-0963">Cytoplasm</keyword>
<keyword id="KW-0903">Direct protein sequencing</keyword>
<keyword id="KW-1185">Reference proteome</keyword>
<keyword id="KW-0808">Transferase</keyword>